<keyword id="KW-0054">Arabinose catabolism</keyword>
<keyword id="KW-0067">ATP-binding</keyword>
<keyword id="KW-0119">Carbohydrate metabolism</keyword>
<keyword id="KW-0418">Kinase</keyword>
<keyword id="KW-0547">Nucleotide-binding</keyword>
<keyword id="KW-0808">Transferase</keyword>
<protein>
    <recommendedName>
        <fullName evidence="1">Ribulokinase</fullName>
        <ecNumber evidence="1">2.7.1.16</ecNumber>
    </recommendedName>
</protein>
<name>ARAB_STAES</name>
<dbReference type="EC" id="2.7.1.16" evidence="1"/>
<dbReference type="EMBL" id="AE015929">
    <property type="protein sequence ID" value="AAO05555.1"/>
    <property type="molecule type" value="Genomic_DNA"/>
</dbReference>
<dbReference type="RefSeq" id="NP_765469.1">
    <property type="nucleotide sequence ID" value="NC_004461.1"/>
</dbReference>
<dbReference type="RefSeq" id="WP_002456635.1">
    <property type="nucleotide sequence ID" value="NZ_WBME01000027.1"/>
</dbReference>
<dbReference type="SMR" id="Q8CRC6"/>
<dbReference type="KEGG" id="sep:SE_1914"/>
<dbReference type="PATRIC" id="fig|176280.10.peg.1872"/>
<dbReference type="eggNOG" id="COG1069">
    <property type="taxonomic scope" value="Bacteria"/>
</dbReference>
<dbReference type="HOGENOM" id="CLU_009281_9_1_9"/>
<dbReference type="OrthoDB" id="9805576at2"/>
<dbReference type="UniPathway" id="UPA00145">
    <property type="reaction ID" value="UER00566"/>
</dbReference>
<dbReference type="Proteomes" id="UP000001411">
    <property type="component" value="Chromosome"/>
</dbReference>
<dbReference type="GO" id="GO:0005737">
    <property type="term" value="C:cytoplasm"/>
    <property type="evidence" value="ECO:0007669"/>
    <property type="project" value="TreeGrafter"/>
</dbReference>
<dbReference type="GO" id="GO:0005524">
    <property type="term" value="F:ATP binding"/>
    <property type="evidence" value="ECO:0007669"/>
    <property type="project" value="UniProtKB-KW"/>
</dbReference>
<dbReference type="GO" id="GO:0019150">
    <property type="term" value="F:D-ribulokinase activity"/>
    <property type="evidence" value="ECO:0007669"/>
    <property type="project" value="RHEA"/>
</dbReference>
<dbReference type="GO" id="GO:0008741">
    <property type="term" value="F:ribulokinase activity"/>
    <property type="evidence" value="ECO:0007669"/>
    <property type="project" value="UniProtKB-UniRule"/>
</dbReference>
<dbReference type="GO" id="GO:0019569">
    <property type="term" value="P:L-arabinose catabolic process to xylulose 5-phosphate"/>
    <property type="evidence" value="ECO:0007669"/>
    <property type="project" value="UniProtKB-UniRule"/>
</dbReference>
<dbReference type="CDD" id="cd07781">
    <property type="entry name" value="ASKHA_NBD_FGGY_L-RBK"/>
    <property type="match status" value="1"/>
</dbReference>
<dbReference type="Gene3D" id="3.30.420.40">
    <property type="match status" value="2"/>
</dbReference>
<dbReference type="HAMAP" id="MF_00520">
    <property type="entry name" value="Ribulokinase"/>
    <property type="match status" value="1"/>
</dbReference>
<dbReference type="InterPro" id="IPR043129">
    <property type="entry name" value="ATPase_NBD"/>
</dbReference>
<dbReference type="InterPro" id="IPR000577">
    <property type="entry name" value="Carb_kinase_FGGY"/>
</dbReference>
<dbReference type="InterPro" id="IPR018485">
    <property type="entry name" value="FGGY_C"/>
</dbReference>
<dbReference type="InterPro" id="IPR018484">
    <property type="entry name" value="FGGY_N"/>
</dbReference>
<dbReference type="InterPro" id="IPR005929">
    <property type="entry name" value="Ribulokinase"/>
</dbReference>
<dbReference type="NCBIfam" id="NF003154">
    <property type="entry name" value="PRK04123.1"/>
    <property type="match status" value="1"/>
</dbReference>
<dbReference type="PANTHER" id="PTHR43435:SF4">
    <property type="entry name" value="FGGY CARBOHYDRATE KINASE DOMAIN-CONTAINING PROTEIN"/>
    <property type="match status" value="1"/>
</dbReference>
<dbReference type="PANTHER" id="PTHR43435">
    <property type="entry name" value="RIBULOKINASE"/>
    <property type="match status" value="1"/>
</dbReference>
<dbReference type="Pfam" id="PF02782">
    <property type="entry name" value="FGGY_C"/>
    <property type="match status" value="1"/>
</dbReference>
<dbReference type="Pfam" id="PF00370">
    <property type="entry name" value="FGGY_N"/>
    <property type="match status" value="1"/>
</dbReference>
<dbReference type="PIRSF" id="PIRSF000538">
    <property type="entry name" value="GlpK"/>
    <property type="match status" value="1"/>
</dbReference>
<dbReference type="SUPFAM" id="SSF53067">
    <property type="entry name" value="Actin-like ATPase domain"/>
    <property type="match status" value="2"/>
</dbReference>
<proteinExistence type="inferred from homology"/>
<feature type="chain" id="PRO_0000198372" description="Ribulokinase">
    <location>
        <begin position="1"/>
        <end position="536"/>
    </location>
</feature>
<comment type="catalytic activity">
    <reaction evidence="1">
        <text>D-ribulose + ATP = D-ribulose 5-phosphate + ADP + H(+)</text>
        <dbReference type="Rhea" id="RHEA:17601"/>
        <dbReference type="ChEBI" id="CHEBI:15378"/>
        <dbReference type="ChEBI" id="CHEBI:17173"/>
        <dbReference type="ChEBI" id="CHEBI:30616"/>
        <dbReference type="ChEBI" id="CHEBI:58121"/>
        <dbReference type="ChEBI" id="CHEBI:456216"/>
        <dbReference type="EC" id="2.7.1.16"/>
    </reaction>
</comment>
<comment type="catalytic activity">
    <reaction evidence="1">
        <text>L-ribulose + ATP = L-ribulose 5-phosphate + ADP + H(+)</text>
        <dbReference type="Rhea" id="RHEA:22072"/>
        <dbReference type="ChEBI" id="CHEBI:15378"/>
        <dbReference type="ChEBI" id="CHEBI:16880"/>
        <dbReference type="ChEBI" id="CHEBI:30616"/>
        <dbReference type="ChEBI" id="CHEBI:58226"/>
        <dbReference type="ChEBI" id="CHEBI:456216"/>
        <dbReference type="EC" id="2.7.1.16"/>
    </reaction>
</comment>
<comment type="pathway">
    <text evidence="1">Carbohydrate degradation; L-arabinose degradation via L-ribulose; D-xylulose 5-phosphate from L-arabinose (bacterial route): step 2/3.</text>
</comment>
<comment type="similarity">
    <text evidence="1">Belongs to the ribulokinase family.</text>
</comment>
<organism>
    <name type="scientific">Staphylococcus epidermidis (strain ATCC 12228 / FDA PCI 1200)</name>
    <dbReference type="NCBI Taxonomy" id="176280"/>
    <lineage>
        <taxon>Bacteria</taxon>
        <taxon>Bacillati</taxon>
        <taxon>Bacillota</taxon>
        <taxon>Bacilli</taxon>
        <taxon>Bacillales</taxon>
        <taxon>Staphylococcaceae</taxon>
        <taxon>Staphylococcus</taxon>
    </lineage>
</organism>
<accession>Q8CRC6</accession>
<reference key="1">
    <citation type="journal article" date="2003" name="Mol. Microbiol.">
        <title>Genome-based analysis of virulence genes in a non-biofilm-forming Staphylococcus epidermidis strain (ATCC 12228).</title>
        <authorList>
            <person name="Zhang Y.-Q."/>
            <person name="Ren S.-X."/>
            <person name="Li H.-L."/>
            <person name="Wang Y.-X."/>
            <person name="Fu G."/>
            <person name="Yang J."/>
            <person name="Qin Z.-Q."/>
            <person name="Miao Y.-G."/>
            <person name="Wang W.-Y."/>
            <person name="Chen R.-S."/>
            <person name="Shen Y."/>
            <person name="Chen Z."/>
            <person name="Yuan Z.-H."/>
            <person name="Zhao G.-P."/>
            <person name="Qu D."/>
            <person name="Danchin A."/>
            <person name="Wen Y.-M."/>
        </authorList>
    </citation>
    <scope>NUCLEOTIDE SEQUENCE [LARGE SCALE GENOMIC DNA]</scope>
    <source>
        <strain>ATCC 12228 / FDA PCI 1200</strain>
    </source>
</reference>
<sequence length="536" mass="60052">MSYSIGIDFGTASGRVILADTSNGHIISRYEEDYANGTYMNSLYDKPLPENYFLQNADDYLQILEQGVQFVLEDSKVNKNDVVGIGVDFTSSTIIFLDEQFEPLHRHEDLKTNPHAYVKLWKHHGAQDEANYMIQMSKNKNWLDYYGSSVNSEWMIPKILEVKHEAPEILRRARYIMEAGDYITSILTNSNIRSNCGIGFKGFWDNEAGFNYDFFHSVDPDLPKIVKEKCEAPIISIGESAGRLCKDYQQIWGLSQDVQVSPFIIDAHSGVLGVGAIEAGEFTAVIGTSTCHLMLDSRQVPISSITGSVKNAIIPGLYAYEAGQPAVGDLFEYSKNQAPKHIVDQANEHHMPVLNYLEELASHIRIEEQHVVVLDWLNGNRSILSNSHLTGSIFGLTLQTPYEMIHRAYIEATAFGTKLIMKQFEDNHIPVHTVYASGGIPQKSKLLVEIYANVLNKRVVVIDSSNASALGAAMLGANVGNAYSTLKEAALSMKQPIAYIQEPEIQKVQAYKPLYHKYCELHDLLGRQYPELSYLI</sequence>
<gene>
    <name evidence="1" type="primary">araB</name>
    <name type="ordered locus">SE_1914</name>
</gene>
<evidence type="ECO:0000255" key="1">
    <source>
        <dbReference type="HAMAP-Rule" id="MF_00520"/>
    </source>
</evidence>